<feature type="chain" id="PRO_0000328233" description="Cysteine synthase">
    <location>
        <begin position="1"/>
        <end position="378"/>
    </location>
</feature>
<feature type="region of interest" description="Disordered" evidence="2">
    <location>
        <begin position="10"/>
        <end position="31"/>
    </location>
</feature>
<feature type="compositionally biased region" description="Low complexity" evidence="2">
    <location>
        <begin position="15"/>
        <end position="28"/>
    </location>
</feature>
<feature type="binding site" evidence="1">
    <location>
        <begin position="215"/>
        <end position="219"/>
    </location>
    <ligand>
        <name>pyridoxal 5'-phosphate</name>
        <dbReference type="ChEBI" id="CHEBI:597326"/>
    </ligand>
</feature>
<feature type="binding site" evidence="1">
    <location>
        <position position="319"/>
    </location>
    <ligand>
        <name>pyridoxal 5'-phosphate</name>
        <dbReference type="ChEBI" id="CHEBI:597326"/>
    </ligand>
</feature>
<feature type="modified residue" description="N6-(pyridoxal phosphate)lysine" evidence="1">
    <location>
        <position position="79"/>
    </location>
</feature>
<comment type="catalytic activity">
    <reaction>
        <text>O-acetyl-L-serine + hydrogen sulfide = L-cysteine + acetate</text>
        <dbReference type="Rhea" id="RHEA:14829"/>
        <dbReference type="ChEBI" id="CHEBI:29919"/>
        <dbReference type="ChEBI" id="CHEBI:30089"/>
        <dbReference type="ChEBI" id="CHEBI:35235"/>
        <dbReference type="ChEBI" id="CHEBI:58340"/>
        <dbReference type="EC" id="2.5.1.47"/>
    </reaction>
</comment>
<comment type="cofactor">
    <cofactor evidence="1">
        <name>pyridoxal 5'-phosphate</name>
        <dbReference type="ChEBI" id="CHEBI:597326"/>
    </cofactor>
</comment>
<comment type="pathway">
    <text>Amino-acid biosynthesis; L-cysteine biosynthesis; L-cysteine from L-serine: step 2/2.</text>
</comment>
<comment type="similarity">
    <text evidence="3">Belongs to the cysteine synthase/cystathionine beta-synthase family.</text>
</comment>
<proteinExistence type="inferred from homology"/>
<evidence type="ECO:0000250" key="1"/>
<evidence type="ECO:0000256" key="2">
    <source>
        <dbReference type="SAM" id="MobiDB-lite"/>
    </source>
</evidence>
<evidence type="ECO:0000305" key="3"/>
<sequence length="378" mass="41101">MFSSIYGYFNSEGDSNQQQNNNNNSNNNLKESVFHSGISNGIIETVGNTPLIRIKSLSEATGCEIYGKAEFMNPGGSPKDRVAREIILDGEKKGLLKKGSTIVEATAGSTGISLTMLGKSRGYNVQLFIPDNVSKEKVDLLEMLGAETKIVPIVGMNNANHFMHCAYQRCLGDDMAFYANQFDNLSNFNAHYNGTAKEIWEQTKGDVDGFVAAAGTGGTVAGISSYLKEVNPNIQNWLIDPPGSGLYSLVNTGVIFHPKDRLVVEKLGPRSFYEGVGVNKKTENFNKASLNGAFRGTEEEGVDMAHYLLKHDGLFLGGSSALNCVGAVKLARKLGPGKTIVTVLCDSGHRYTSRLYSKSWLNDHNFQVSDLSNLNFVK</sequence>
<name>CYSK_DICDI</name>
<dbReference type="EC" id="2.5.1.47"/>
<dbReference type="EMBL" id="AAFI02000197">
    <property type="protein sequence ID" value="EAL60969.1"/>
    <property type="molecule type" value="Genomic_DNA"/>
</dbReference>
<dbReference type="RefSeq" id="XP_629379.1">
    <property type="nucleotide sequence ID" value="XM_629377.1"/>
</dbReference>
<dbReference type="SMR" id="Q54CN7"/>
<dbReference type="FunCoup" id="Q54CN7">
    <property type="interactions" value="140"/>
</dbReference>
<dbReference type="STRING" id="44689.Q54CN7"/>
<dbReference type="PaxDb" id="44689-DDB0230066"/>
<dbReference type="EnsemblProtists" id="EAL60969">
    <property type="protein sequence ID" value="EAL60969"/>
    <property type="gene ID" value="DDB_G0292840"/>
</dbReference>
<dbReference type="GeneID" id="8628897"/>
<dbReference type="KEGG" id="ddi:DDB_G0292840"/>
<dbReference type="dictyBase" id="DDB_G0292840">
    <property type="gene designation" value="cysK"/>
</dbReference>
<dbReference type="VEuPathDB" id="AmoebaDB:DDB_G0292840"/>
<dbReference type="eggNOG" id="KOG1481">
    <property type="taxonomic scope" value="Eukaryota"/>
</dbReference>
<dbReference type="HOGENOM" id="CLU_021018_1_0_1"/>
<dbReference type="InParanoid" id="Q54CN7"/>
<dbReference type="OMA" id="WMADYGF"/>
<dbReference type="PhylomeDB" id="Q54CN7"/>
<dbReference type="UniPathway" id="UPA00136">
    <property type="reaction ID" value="UER00200"/>
</dbReference>
<dbReference type="PRO" id="PR:Q54CN7"/>
<dbReference type="Proteomes" id="UP000002195">
    <property type="component" value="Chromosome 6"/>
</dbReference>
<dbReference type="GO" id="GO:0005737">
    <property type="term" value="C:cytoplasm"/>
    <property type="evidence" value="ECO:0000318"/>
    <property type="project" value="GO_Central"/>
</dbReference>
<dbReference type="GO" id="GO:0004124">
    <property type="term" value="F:cysteine synthase activity"/>
    <property type="evidence" value="ECO:0000250"/>
    <property type="project" value="dictyBase"/>
</dbReference>
<dbReference type="GO" id="GO:0019344">
    <property type="term" value="P:cysteine biosynthetic process"/>
    <property type="evidence" value="ECO:0000250"/>
    <property type="project" value="dictyBase"/>
</dbReference>
<dbReference type="GO" id="GO:0006535">
    <property type="term" value="P:cysteine biosynthetic process from serine"/>
    <property type="evidence" value="ECO:0000318"/>
    <property type="project" value="GO_Central"/>
</dbReference>
<dbReference type="CDD" id="cd01561">
    <property type="entry name" value="CBS_like"/>
    <property type="match status" value="1"/>
</dbReference>
<dbReference type="FunFam" id="3.40.50.1100:FF:000016">
    <property type="entry name" value="Cysteine synthase A"/>
    <property type="match status" value="1"/>
</dbReference>
<dbReference type="FunFam" id="3.40.50.1100:FF:000049">
    <property type="entry name" value="Cysteine synthase, putative"/>
    <property type="match status" value="1"/>
</dbReference>
<dbReference type="Gene3D" id="3.40.50.1100">
    <property type="match status" value="2"/>
</dbReference>
<dbReference type="InterPro" id="IPR050214">
    <property type="entry name" value="Cys_Synth/Cystath_Beta-Synth"/>
</dbReference>
<dbReference type="InterPro" id="IPR001216">
    <property type="entry name" value="P-phosphate_BS"/>
</dbReference>
<dbReference type="InterPro" id="IPR001926">
    <property type="entry name" value="TrpB-like_PALP"/>
</dbReference>
<dbReference type="InterPro" id="IPR036052">
    <property type="entry name" value="TrpB-like_PALP_sf"/>
</dbReference>
<dbReference type="NCBIfam" id="NF007989">
    <property type="entry name" value="PRK10717.1"/>
    <property type="match status" value="1"/>
</dbReference>
<dbReference type="PANTHER" id="PTHR10314">
    <property type="entry name" value="CYSTATHIONINE BETA-SYNTHASE"/>
    <property type="match status" value="1"/>
</dbReference>
<dbReference type="Pfam" id="PF00291">
    <property type="entry name" value="PALP"/>
    <property type="match status" value="1"/>
</dbReference>
<dbReference type="SUPFAM" id="SSF53686">
    <property type="entry name" value="Tryptophan synthase beta subunit-like PLP-dependent enzymes"/>
    <property type="match status" value="1"/>
</dbReference>
<dbReference type="PROSITE" id="PS00901">
    <property type="entry name" value="CYS_SYNTHASE"/>
    <property type="match status" value="1"/>
</dbReference>
<reference key="1">
    <citation type="journal article" date="2005" name="Nature">
        <title>The genome of the social amoeba Dictyostelium discoideum.</title>
        <authorList>
            <person name="Eichinger L."/>
            <person name="Pachebat J.A."/>
            <person name="Gloeckner G."/>
            <person name="Rajandream M.A."/>
            <person name="Sucgang R."/>
            <person name="Berriman M."/>
            <person name="Song J."/>
            <person name="Olsen R."/>
            <person name="Szafranski K."/>
            <person name="Xu Q."/>
            <person name="Tunggal B."/>
            <person name="Kummerfeld S."/>
            <person name="Madera M."/>
            <person name="Konfortov B.A."/>
            <person name="Rivero F."/>
            <person name="Bankier A.T."/>
            <person name="Lehmann R."/>
            <person name="Hamlin N."/>
            <person name="Davies R."/>
            <person name="Gaudet P."/>
            <person name="Fey P."/>
            <person name="Pilcher K."/>
            <person name="Chen G."/>
            <person name="Saunders D."/>
            <person name="Sodergren E.J."/>
            <person name="Davis P."/>
            <person name="Kerhornou A."/>
            <person name="Nie X."/>
            <person name="Hall N."/>
            <person name="Anjard C."/>
            <person name="Hemphill L."/>
            <person name="Bason N."/>
            <person name="Farbrother P."/>
            <person name="Desany B."/>
            <person name="Just E."/>
            <person name="Morio T."/>
            <person name="Rost R."/>
            <person name="Churcher C.M."/>
            <person name="Cooper J."/>
            <person name="Haydock S."/>
            <person name="van Driessche N."/>
            <person name="Cronin A."/>
            <person name="Goodhead I."/>
            <person name="Muzny D.M."/>
            <person name="Mourier T."/>
            <person name="Pain A."/>
            <person name="Lu M."/>
            <person name="Harper D."/>
            <person name="Lindsay R."/>
            <person name="Hauser H."/>
            <person name="James K.D."/>
            <person name="Quiles M."/>
            <person name="Madan Babu M."/>
            <person name="Saito T."/>
            <person name="Buchrieser C."/>
            <person name="Wardroper A."/>
            <person name="Felder M."/>
            <person name="Thangavelu M."/>
            <person name="Johnson D."/>
            <person name="Knights A."/>
            <person name="Loulseged H."/>
            <person name="Mungall K.L."/>
            <person name="Oliver K."/>
            <person name="Price C."/>
            <person name="Quail M.A."/>
            <person name="Urushihara H."/>
            <person name="Hernandez J."/>
            <person name="Rabbinowitsch E."/>
            <person name="Steffen D."/>
            <person name="Sanders M."/>
            <person name="Ma J."/>
            <person name="Kohara Y."/>
            <person name="Sharp S."/>
            <person name="Simmonds M.N."/>
            <person name="Spiegler S."/>
            <person name="Tivey A."/>
            <person name="Sugano S."/>
            <person name="White B."/>
            <person name="Walker D."/>
            <person name="Woodward J.R."/>
            <person name="Winckler T."/>
            <person name="Tanaka Y."/>
            <person name="Shaulsky G."/>
            <person name="Schleicher M."/>
            <person name="Weinstock G.M."/>
            <person name="Rosenthal A."/>
            <person name="Cox E.C."/>
            <person name="Chisholm R.L."/>
            <person name="Gibbs R.A."/>
            <person name="Loomis W.F."/>
            <person name="Platzer M."/>
            <person name="Kay R.R."/>
            <person name="Williams J.G."/>
            <person name="Dear P.H."/>
            <person name="Noegel A.A."/>
            <person name="Barrell B.G."/>
            <person name="Kuspa A."/>
        </authorList>
    </citation>
    <scope>NUCLEOTIDE SEQUENCE [LARGE SCALE GENOMIC DNA]</scope>
    <source>
        <strain>AX4</strain>
    </source>
</reference>
<protein>
    <recommendedName>
        <fullName>Cysteine synthase</fullName>
        <shortName>CSase</shortName>
        <ecNumber>2.5.1.47</ecNumber>
    </recommendedName>
    <alternativeName>
        <fullName>O-acetylserine (thiol)-lyase</fullName>
        <shortName>OAS-TL</shortName>
    </alternativeName>
    <alternativeName>
        <fullName>O-acetylserine sulfhydrylase</fullName>
    </alternativeName>
</protein>
<accession>Q54CN7</accession>
<keyword id="KW-0028">Amino-acid biosynthesis</keyword>
<keyword id="KW-0198">Cysteine biosynthesis</keyword>
<keyword id="KW-0663">Pyridoxal phosphate</keyword>
<keyword id="KW-1185">Reference proteome</keyword>
<keyword id="KW-0808">Transferase</keyword>
<organism>
    <name type="scientific">Dictyostelium discoideum</name>
    <name type="common">Social amoeba</name>
    <dbReference type="NCBI Taxonomy" id="44689"/>
    <lineage>
        <taxon>Eukaryota</taxon>
        <taxon>Amoebozoa</taxon>
        <taxon>Evosea</taxon>
        <taxon>Eumycetozoa</taxon>
        <taxon>Dictyostelia</taxon>
        <taxon>Dictyosteliales</taxon>
        <taxon>Dictyosteliaceae</taxon>
        <taxon>Dictyostelium</taxon>
    </lineage>
</organism>
<gene>
    <name type="primary">cysK</name>
    <name type="ORF">DDB_G0292840</name>
</gene>